<gene>
    <name type="primary">ATG21</name>
    <name type="ordered locus">CAALFM_C103330CA</name>
    <name type="ORF">CaO19.10548</name>
    <name type="ORF">CaO19.3030</name>
</gene>
<proteinExistence type="inferred from homology"/>
<dbReference type="EMBL" id="CP017623">
    <property type="protein sequence ID" value="AOW26014.1"/>
    <property type="molecule type" value="Genomic_DNA"/>
</dbReference>
<dbReference type="RefSeq" id="XP_721528.1">
    <property type="nucleotide sequence ID" value="XM_716435.2"/>
</dbReference>
<dbReference type="SMR" id="Q5AI22"/>
<dbReference type="STRING" id="237561.Q5AI22"/>
<dbReference type="EnsemblFungi" id="C1_03330C_A-T">
    <property type="protein sequence ID" value="C1_03330C_A-T-p1"/>
    <property type="gene ID" value="C1_03330C_A"/>
</dbReference>
<dbReference type="GeneID" id="3636859"/>
<dbReference type="KEGG" id="cal:CAALFM_C103330CA"/>
<dbReference type="CGD" id="CAL0000201683">
    <property type="gene designation" value="orf19.10548"/>
</dbReference>
<dbReference type="VEuPathDB" id="FungiDB:C1_03330C_A"/>
<dbReference type="eggNOG" id="KOG2110">
    <property type="taxonomic scope" value="Eukaryota"/>
</dbReference>
<dbReference type="HOGENOM" id="CLU_025895_5_2_1"/>
<dbReference type="InParanoid" id="Q5AI22"/>
<dbReference type="OrthoDB" id="1667587at2759"/>
<dbReference type="PRO" id="PR:Q5AI22"/>
<dbReference type="Proteomes" id="UP000000559">
    <property type="component" value="Chromosome 1"/>
</dbReference>
<dbReference type="GO" id="GO:0005829">
    <property type="term" value="C:cytosol"/>
    <property type="evidence" value="ECO:0000318"/>
    <property type="project" value="GO_Central"/>
</dbReference>
<dbReference type="GO" id="GO:0000329">
    <property type="term" value="C:fungal-type vacuole membrane"/>
    <property type="evidence" value="ECO:0000318"/>
    <property type="project" value="GO_Central"/>
</dbReference>
<dbReference type="GO" id="GO:0034045">
    <property type="term" value="C:phagophore assembly site membrane"/>
    <property type="evidence" value="ECO:0000318"/>
    <property type="project" value="GO_Central"/>
</dbReference>
<dbReference type="GO" id="GO:0080025">
    <property type="term" value="F:phosphatidylinositol-3,5-bisphosphate binding"/>
    <property type="evidence" value="ECO:0000318"/>
    <property type="project" value="GO_Central"/>
</dbReference>
<dbReference type="GO" id="GO:0032266">
    <property type="term" value="F:phosphatidylinositol-3-phosphate binding"/>
    <property type="evidence" value="ECO:0000318"/>
    <property type="project" value="GO_Central"/>
</dbReference>
<dbReference type="GO" id="GO:0030674">
    <property type="term" value="F:protein-macromolecule adaptor activity"/>
    <property type="evidence" value="ECO:0000318"/>
    <property type="project" value="GO_Central"/>
</dbReference>
<dbReference type="GO" id="GO:0000422">
    <property type="term" value="P:autophagy of mitochondrion"/>
    <property type="evidence" value="ECO:0000318"/>
    <property type="project" value="GO_Central"/>
</dbReference>
<dbReference type="GO" id="GO:0061723">
    <property type="term" value="P:glycophagy"/>
    <property type="evidence" value="ECO:0000318"/>
    <property type="project" value="GO_Central"/>
</dbReference>
<dbReference type="GO" id="GO:0044804">
    <property type="term" value="P:nucleophagy"/>
    <property type="evidence" value="ECO:0000318"/>
    <property type="project" value="GO_Central"/>
</dbReference>
<dbReference type="GO" id="GO:0000425">
    <property type="term" value="P:pexophagy"/>
    <property type="evidence" value="ECO:0000318"/>
    <property type="project" value="GO_Central"/>
</dbReference>
<dbReference type="GO" id="GO:0034497">
    <property type="term" value="P:protein localization to phagophore assembly site"/>
    <property type="evidence" value="ECO:0000318"/>
    <property type="project" value="GO_Central"/>
</dbReference>
<dbReference type="GO" id="GO:0015031">
    <property type="term" value="P:protein transport"/>
    <property type="evidence" value="ECO:0007669"/>
    <property type="project" value="UniProtKB-KW"/>
</dbReference>
<dbReference type="Gene3D" id="2.130.10.10">
    <property type="entry name" value="YVTN repeat-like/Quinoprotein amine dehydrogenase"/>
    <property type="match status" value="1"/>
</dbReference>
<dbReference type="InterPro" id="IPR048720">
    <property type="entry name" value="PROPPIN"/>
</dbReference>
<dbReference type="InterPro" id="IPR015943">
    <property type="entry name" value="WD40/YVTN_repeat-like_dom_sf"/>
</dbReference>
<dbReference type="InterPro" id="IPR036322">
    <property type="entry name" value="WD40_repeat_dom_sf"/>
</dbReference>
<dbReference type="InterPro" id="IPR001680">
    <property type="entry name" value="WD40_rpt"/>
</dbReference>
<dbReference type="PANTHER" id="PTHR11227">
    <property type="entry name" value="WD-REPEAT PROTEIN INTERACTING WITH PHOSPHOINOSIDES WIPI -RELATED"/>
    <property type="match status" value="1"/>
</dbReference>
<dbReference type="Pfam" id="PF21032">
    <property type="entry name" value="PROPPIN"/>
    <property type="match status" value="2"/>
</dbReference>
<dbReference type="SMART" id="SM00320">
    <property type="entry name" value="WD40"/>
    <property type="match status" value="2"/>
</dbReference>
<dbReference type="SUPFAM" id="SSF50978">
    <property type="entry name" value="WD40 repeat-like"/>
    <property type="match status" value="1"/>
</dbReference>
<name>ATG21_CANAL</name>
<accession>Q5AI22</accession>
<accession>A0A1D8PCZ9</accession>
<reference key="1">
    <citation type="journal article" date="2004" name="Proc. Natl. Acad. Sci. U.S.A.">
        <title>The diploid genome sequence of Candida albicans.</title>
        <authorList>
            <person name="Jones T."/>
            <person name="Federspiel N.A."/>
            <person name="Chibana H."/>
            <person name="Dungan J."/>
            <person name="Kalman S."/>
            <person name="Magee B.B."/>
            <person name="Newport G."/>
            <person name="Thorstenson Y.R."/>
            <person name="Agabian N."/>
            <person name="Magee P.T."/>
            <person name="Davis R.W."/>
            <person name="Scherer S."/>
        </authorList>
    </citation>
    <scope>NUCLEOTIDE SEQUENCE [LARGE SCALE GENOMIC DNA]</scope>
    <source>
        <strain>SC5314 / ATCC MYA-2876</strain>
    </source>
</reference>
<reference key="2">
    <citation type="journal article" date="2007" name="Genome Biol.">
        <title>Assembly of the Candida albicans genome into sixteen supercontigs aligned on the eight chromosomes.</title>
        <authorList>
            <person name="van het Hoog M."/>
            <person name="Rast T.J."/>
            <person name="Martchenko M."/>
            <person name="Grindle S."/>
            <person name="Dignard D."/>
            <person name="Hogues H."/>
            <person name="Cuomo C."/>
            <person name="Berriman M."/>
            <person name="Scherer S."/>
            <person name="Magee B.B."/>
            <person name="Whiteway M."/>
            <person name="Chibana H."/>
            <person name="Nantel A."/>
            <person name="Magee P.T."/>
        </authorList>
    </citation>
    <scope>GENOME REANNOTATION</scope>
    <source>
        <strain>SC5314 / ATCC MYA-2876</strain>
    </source>
</reference>
<reference key="3">
    <citation type="journal article" date="2013" name="Genome Biol.">
        <title>Assembly of a phased diploid Candida albicans genome facilitates allele-specific measurements and provides a simple model for repeat and indel structure.</title>
        <authorList>
            <person name="Muzzey D."/>
            <person name="Schwartz K."/>
            <person name="Weissman J.S."/>
            <person name="Sherlock G."/>
        </authorList>
    </citation>
    <scope>NUCLEOTIDE SEQUENCE [LARGE SCALE GENOMIC DNA]</scope>
    <scope>GENOME REANNOTATION</scope>
    <source>
        <strain>SC5314 / ATCC MYA-2876</strain>
    </source>
</reference>
<feature type="chain" id="PRO_0000050876" description="Autophagy-related protein 21">
    <location>
        <begin position="1"/>
        <end position="529"/>
    </location>
</feature>
<feature type="repeat" description="WD 1">
    <location>
        <begin position="271"/>
        <end position="311"/>
    </location>
</feature>
<feature type="repeat" description="WD 2">
    <location>
        <begin position="321"/>
        <end position="361"/>
    </location>
</feature>
<feature type="region of interest" description="Disordered" evidence="3">
    <location>
        <begin position="49"/>
        <end position="70"/>
    </location>
</feature>
<feature type="region of interest" description="Disordered" evidence="3">
    <location>
        <begin position="362"/>
        <end position="388"/>
    </location>
</feature>
<feature type="short sequence motif" description="L/FRRG motif" evidence="2">
    <location>
        <begin position="318"/>
        <end position="322"/>
    </location>
</feature>
<feature type="compositionally biased region" description="Polar residues" evidence="3">
    <location>
        <begin position="49"/>
        <end position="62"/>
    </location>
</feature>
<feature type="compositionally biased region" description="Basic and acidic residues" evidence="3">
    <location>
        <begin position="366"/>
        <end position="375"/>
    </location>
</feature>
<keyword id="KW-0072">Autophagy</keyword>
<keyword id="KW-0963">Cytoplasm</keyword>
<keyword id="KW-0472">Membrane</keyword>
<keyword id="KW-0653">Protein transport</keyword>
<keyword id="KW-1185">Reference proteome</keyword>
<keyword id="KW-0677">Repeat</keyword>
<keyword id="KW-0813">Transport</keyword>
<keyword id="KW-0926">Vacuole</keyword>
<keyword id="KW-0853">WD repeat</keyword>
<comment type="function">
    <text evidence="1">Required for cytoplasm to vacuole transport (Cvt) vesicles formation and mitophagy. Involved in binding of phosphatidylethanolamine to ATG8 and in recruitment of ATG8 and ATG5 to the pre-autophagosomal structure. Protects ATG8 from ARG4-mediated cleavage (By similarity).</text>
</comment>
<comment type="subcellular location">
    <subcellularLocation>
        <location evidence="1">Cytoplasm</location>
    </subcellularLocation>
    <subcellularLocation>
        <location evidence="1">Membrane</location>
        <topology evidence="1">Peripheral membrane protein</topology>
    </subcellularLocation>
    <subcellularLocation>
        <location evidence="1">Vacuole membrane</location>
        <topology evidence="1">Peripheral membrane protein</topology>
    </subcellularLocation>
    <text evidence="1">Vacuolar and perivacuolar punctate structures.</text>
</comment>
<comment type="domain">
    <text evidence="1">Contains a beta-propeller domain involved in specific binding to phosphatidylinositol 3,5-bisphosphate (PIP2).</text>
</comment>
<comment type="domain">
    <text evidence="2">The L/FRRG motif is essential for the cytoplasm to vacuole transport (Cvt) pathway and for the recruitment of ATG8 and ATG16 to the PAS in nutrient-rich medium and in both its recruitment to and dissociation from the PAS under starvation conditions.</text>
</comment>
<comment type="similarity">
    <text evidence="4">Belongs to the WD repeat PROPPIN family.</text>
</comment>
<protein>
    <recommendedName>
        <fullName>Autophagy-related protein 21</fullName>
    </recommendedName>
</protein>
<evidence type="ECO:0000250" key="1"/>
<evidence type="ECO:0000250" key="2">
    <source>
        <dbReference type="UniProtKB" id="Q02887"/>
    </source>
</evidence>
<evidence type="ECO:0000256" key="3">
    <source>
        <dbReference type="SAM" id="MobiDB-lite"/>
    </source>
</evidence>
<evidence type="ECO:0000305" key="4"/>
<sequence length="529" mass="60019">MVTINDLSFNPDYSSISVSTSDGFKIFNCEPFGEFYSSQESPLRKSISNSLEDSAGCQNPTHSKTDSQDTPARFPTAFLKMLFSTSLTIVVPQTQDNLGNRLLKIYNLKQNLKICELNFPSSIIDIKLNRKRLLVVLDTGQLYIYDLSCVRLLKILQLSFNEHDGDQKFIGDLSADDSSWLIIPVQSTNNQTDLLNAETGSQPSTPKLTPSDSVINTGSYSQYLEFTRNSSLSNLKKKNKLITLEDIKNDSEGWVVVYDTINLAPVVIFEAHHSTIARICISHRDNKVATASIKGTIIRIFDLKEFEGKVKVHKVKNLRRGHNLVKVNSLSFHNDNHILGCGSESNTIHLFKIHEEESDICTNENSEDRTNHNSDYEDSDGDTSKSSEDLNENLANLLISKPLDPVPMETEDKLSSSWFVKTKKLINNQYTSSIIKKLPYKDYFENLIWEPPQRSFAYIKLPEYAPHNEKDPRSNKVEIGFNNDLVFIASYHTGNFYQYQIPKQRGPVSSINEDDKREECSLISQFNLI</sequence>
<organism>
    <name type="scientific">Candida albicans (strain SC5314 / ATCC MYA-2876)</name>
    <name type="common">Yeast</name>
    <dbReference type="NCBI Taxonomy" id="237561"/>
    <lineage>
        <taxon>Eukaryota</taxon>
        <taxon>Fungi</taxon>
        <taxon>Dikarya</taxon>
        <taxon>Ascomycota</taxon>
        <taxon>Saccharomycotina</taxon>
        <taxon>Pichiomycetes</taxon>
        <taxon>Debaryomycetaceae</taxon>
        <taxon>Candida/Lodderomyces clade</taxon>
        <taxon>Candida</taxon>
    </lineage>
</organism>